<organism>
    <name type="scientific">Citrifermentans bemidjiense (strain ATCC BAA-1014 / DSM 16622 / JCM 12645 / Bem)</name>
    <name type="common">Geobacter bemidjiensis</name>
    <dbReference type="NCBI Taxonomy" id="404380"/>
    <lineage>
        <taxon>Bacteria</taxon>
        <taxon>Pseudomonadati</taxon>
        <taxon>Thermodesulfobacteriota</taxon>
        <taxon>Desulfuromonadia</taxon>
        <taxon>Geobacterales</taxon>
        <taxon>Geobacteraceae</taxon>
        <taxon>Citrifermentans</taxon>
    </lineage>
</organism>
<keyword id="KW-0963">Cytoplasm</keyword>
<keyword id="KW-0251">Elongation factor</keyword>
<keyword id="KW-0648">Protein biosynthesis</keyword>
<keyword id="KW-1185">Reference proteome</keyword>
<protein>
    <recommendedName>
        <fullName evidence="1">Elongation factor Ts</fullName>
        <shortName evidence="1">EF-Ts</shortName>
    </recommendedName>
</protein>
<feature type="chain" id="PRO_1000116741" description="Elongation factor Ts">
    <location>
        <begin position="1"/>
        <end position="216"/>
    </location>
</feature>
<feature type="region of interest" description="Involved in Mg(2+) ion dislocation from EF-Tu" evidence="1">
    <location>
        <begin position="81"/>
        <end position="84"/>
    </location>
</feature>
<proteinExistence type="inferred from homology"/>
<gene>
    <name evidence="1" type="primary">tsf</name>
    <name type="ordered locus">Gbem_2755</name>
</gene>
<sequence length="216" mass="23340">MSITAAQVNELRKATGAGLMDCKKALTETGGDHEKAIDYLRTKGLAAASKKAGRAATEGLVGSYIHAGGKIGVLVEVNCETDFVAKNENFQGFVKDIAMHIAAASPLYVRREEVPAELIEREKAIYREKAKESGKPAAIIEKILDGQINKFFADICLLEQTYVKDPDKTIQTFLNETIASIGENMSIRRFAKFVLGEGLAKKESDFAAEVAAAVGQ</sequence>
<evidence type="ECO:0000255" key="1">
    <source>
        <dbReference type="HAMAP-Rule" id="MF_00050"/>
    </source>
</evidence>
<name>EFTS_CITBB</name>
<reference key="1">
    <citation type="submission" date="2008-07" db="EMBL/GenBank/DDBJ databases">
        <title>Complete sequence of Geobacter bemidjiensis BEM.</title>
        <authorList>
            <consortium name="US DOE Joint Genome Institute"/>
            <person name="Lucas S."/>
            <person name="Copeland A."/>
            <person name="Lapidus A."/>
            <person name="Glavina del Rio T."/>
            <person name="Dalin E."/>
            <person name="Tice H."/>
            <person name="Bruce D."/>
            <person name="Goodwin L."/>
            <person name="Pitluck S."/>
            <person name="Kiss H."/>
            <person name="Brettin T."/>
            <person name="Detter J.C."/>
            <person name="Han C."/>
            <person name="Kuske C.R."/>
            <person name="Schmutz J."/>
            <person name="Larimer F."/>
            <person name="Land M."/>
            <person name="Hauser L."/>
            <person name="Kyrpides N."/>
            <person name="Lykidis A."/>
            <person name="Lovley D."/>
            <person name="Richardson P."/>
        </authorList>
    </citation>
    <scope>NUCLEOTIDE SEQUENCE [LARGE SCALE GENOMIC DNA]</scope>
    <source>
        <strain>ATCC BAA-1014 / DSM 16622 / JCM 12645 / Bem</strain>
    </source>
</reference>
<comment type="function">
    <text evidence="1">Associates with the EF-Tu.GDP complex and induces the exchange of GDP to GTP. It remains bound to the aminoacyl-tRNA.EF-Tu.GTP complex up to the GTP hydrolysis stage on the ribosome.</text>
</comment>
<comment type="subcellular location">
    <subcellularLocation>
        <location evidence="1">Cytoplasm</location>
    </subcellularLocation>
</comment>
<comment type="similarity">
    <text evidence="1">Belongs to the EF-Ts family.</text>
</comment>
<accession>B5EHW0</accession>
<dbReference type="EMBL" id="CP001124">
    <property type="protein sequence ID" value="ACH39759.1"/>
    <property type="molecule type" value="Genomic_DNA"/>
</dbReference>
<dbReference type="RefSeq" id="WP_012531185.1">
    <property type="nucleotide sequence ID" value="NC_011146.1"/>
</dbReference>
<dbReference type="SMR" id="B5EHW0"/>
<dbReference type="STRING" id="404380.Gbem_2755"/>
<dbReference type="KEGG" id="gbm:Gbem_2755"/>
<dbReference type="eggNOG" id="COG0264">
    <property type="taxonomic scope" value="Bacteria"/>
</dbReference>
<dbReference type="HOGENOM" id="CLU_047155_1_1_7"/>
<dbReference type="OrthoDB" id="9808348at2"/>
<dbReference type="Proteomes" id="UP000008825">
    <property type="component" value="Chromosome"/>
</dbReference>
<dbReference type="GO" id="GO:0005737">
    <property type="term" value="C:cytoplasm"/>
    <property type="evidence" value="ECO:0007669"/>
    <property type="project" value="UniProtKB-SubCell"/>
</dbReference>
<dbReference type="GO" id="GO:0003746">
    <property type="term" value="F:translation elongation factor activity"/>
    <property type="evidence" value="ECO:0007669"/>
    <property type="project" value="UniProtKB-UniRule"/>
</dbReference>
<dbReference type="CDD" id="cd14275">
    <property type="entry name" value="UBA_EF-Ts"/>
    <property type="match status" value="1"/>
</dbReference>
<dbReference type="FunFam" id="1.10.286.20:FF:000001">
    <property type="entry name" value="Elongation factor Ts"/>
    <property type="match status" value="1"/>
</dbReference>
<dbReference type="FunFam" id="1.10.8.10:FF:000001">
    <property type="entry name" value="Elongation factor Ts"/>
    <property type="match status" value="1"/>
</dbReference>
<dbReference type="Gene3D" id="1.10.286.20">
    <property type="match status" value="1"/>
</dbReference>
<dbReference type="Gene3D" id="1.10.8.10">
    <property type="entry name" value="DNA helicase RuvA subunit, C-terminal domain"/>
    <property type="match status" value="1"/>
</dbReference>
<dbReference type="Gene3D" id="3.30.479.20">
    <property type="entry name" value="Elongation factor Ts, dimerisation domain"/>
    <property type="match status" value="1"/>
</dbReference>
<dbReference type="HAMAP" id="MF_00050">
    <property type="entry name" value="EF_Ts"/>
    <property type="match status" value="1"/>
</dbReference>
<dbReference type="InterPro" id="IPR036402">
    <property type="entry name" value="EF-Ts_dimer_sf"/>
</dbReference>
<dbReference type="InterPro" id="IPR001816">
    <property type="entry name" value="Transl_elong_EFTs/EF1B"/>
</dbReference>
<dbReference type="InterPro" id="IPR014039">
    <property type="entry name" value="Transl_elong_EFTs/EF1B_dimer"/>
</dbReference>
<dbReference type="InterPro" id="IPR018101">
    <property type="entry name" value="Transl_elong_Ts_CS"/>
</dbReference>
<dbReference type="InterPro" id="IPR009060">
    <property type="entry name" value="UBA-like_sf"/>
</dbReference>
<dbReference type="NCBIfam" id="TIGR00116">
    <property type="entry name" value="tsf"/>
    <property type="match status" value="2"/>
</dbReference>
<dbReference type="PANTHER" id="PTHR11741">
    <property type="entry name" value="ELONGATION FACTOR TS"/>
    <property type="match status" value="1"/>
</dbReference>
<dbReference type="PANTHER" id="PTHR11741:SF0">
    <property type="entry name" value="ELONGATION FACTOR TS, MITOCHONDRIAL"/>
    <property type="match status" value="1"/>
</dbReference>
<dbReference type="Pfam" id="PF00889">
    <property type="entry name" value="EF_TS"/>
    <property type="match status" value="2"/>
</dbReference>
<dbReference type="SUPFAM" id="SSF54713">
    <property type="entry name" value="Elongation factor Ts (EF-Ts), dimerisation domain"/>
    <property type="match status" value="1"/>
</dbReference>
<dbReference type="SUPFAM" id="SSF46934">
    <property type="entry name" value="UBA-like"/>
    <property type="match status" value="1"/>
</dbReference>
<dbReference type="PROSITE" id="PS01126">
    <property type="entry name" value="EF_TS_1"/>
    <property type="match status" value="1"/>
</dbReference>
<dbReference type="PROSITE" id="PS01127">
    <property type="entry name" value="EF_TS_2"/>
    <property type="match status" value="1"/>
</dbReference>